<evidence type="ECO:0000250" key="1"/>
<evidence type="ECO:0000255" key="2"/>
<evidence type="ECO:0000256" key="3">
    <source>
        <dbReference type="SAM" id="MobiDB-lite"/>
    </source>
</evidence>
<evidence type="ECO:0000305" key="4"/>
<proteinExistence type="evidence at transcript level"/>
<accession>Q0JAI9</accession>
<accession>A0A0P0WEA5</accession>
<accession>A3AX05</accession>
<accession>B7E314</accession>
<accession>Q7X7D2</accession>
<name>SCAM6_ORYSJ</name>
<keyword id="KW-1003">Cell membrane</keyword>
<keyword id="KW-0175">Coiled coil</keyword>
<keyword id="KW-0968">Cytoplasmic vesicle</keyword>
<keyword id="KW-0472">Membrane</keyword>
<keyword id="KW-1185">Reference proteome</keyword>
<keyword id="KW-0812">Transmembrane</keyword>
<keyword id="KW-1133">Transmembrane helix</keyword>
<keyword id="KW-0813">Transport</keyword>
<gene>
    <name type="primary">SCAMP6</name>
    <name type="ordered locus">Os04g0597000</name>
    <name type="ordered locus">Os04g0595800</name>
    <name type="ordered locus">LOC_Os04g50890</name>
    <name type="ORF">OsJ_16007</name>
    <name type="ORF">OSJNBa0006A01.24</name>
    <name type="ORF">OSJNba0093F12.6</name>
</gene>
<sequence length="273" mass="30501">MHHDPNPFDEGNADDNPFSNGGGGGGGGGSRQQYGFRPTEPAGFGAGRGDATVDVPLDTMGDSKSKARELSSWETDLKRREADIKRREEALRNAGVPMEDKNWPPFFPIIHHDIANEIPANLQKLQYLAFASWLGIVLCLSWNFIAVIVCWIKEGDSKLFFLATIYALLGIPLSYLIWYRPLYRAMRTNSAFSFGWFFLCYLIHIGFCIIAAIAPPIVFHGKSLTGILAAIDTFSEHVIIGIFYFVGFALFCLETLLSIGVLQRVYMYFRGNK</sequence>
<reference key="1">
    <citation type="journal article" date="2002" name="Nature">
        <title>Sequence and analysis of rice chromosome 4.</title>
        <authorList>
            <person name="Feng Q."/>
            <person name="Zhang Y."/>
            <person name="Hao P."/>
            <person name="Wang S."/>
            <person name="Fu G."/>
            <person name="Huang Y."/>
            <person name="Li Y."/>
            <person name="Zhu J."/>
            <person name="Liu Y."/>
            <person name="Hu X."/>
            <person name="Jia P."/>
            <person name="Zhang Y."/>
            <person name="Zhao Q."/>
            <person name="Ying K."/>
            <person name="Yu S."/>
            <person name="Tang Y."/>
            <person name="Weng Q."/>
            <person name="Zhang L."/>
            <person name="Lu Y."/>
            <person name="Mu J."/>
            <person name="Lu Y."/>
            <person name="Zhang L.S."/>
            <person name="Yu Z."/>
            <person name="Fan D."/>
            <person name="Liu X."/>
            <person name="Lu T."/>
            <person name="Li C."/>
            <person name="Wu Y."/>
            <person name="Sun T."/>
            <person name="Lei H."/>
            <person name="Li T."/>
            <person name="Hu H."/>
            <person name="Guan J."/>
            <person name="Wu M."/>
            <person name="Zhang R."/>
            <person name="Zhou B."/>
            <person name="Chen Z."/>
            <person name="Chen L."/>
            <person name="Jin Z."/>
            <person name="Wang R."/>
            <person name="Yin H."/>
            <person name="Cai Z."/>
            <person name="Ren S."/>
            <person name="Lv G."/>
            <person name="Gu W."/>
            <person name="Zhu G."/>
            <person name="Tu Y."/>
            <person name="Jia J."/>
            <person name="Zhang Y."/>
            <person name="Chen J."/>
            <person name="Kang H."/>
            <person name="Chen X."/>
            <person name="Shao C."/>
            <person name="Sun Y."/>
            <person name="Hu Q."/>
            <person name="Zhang X."/>
            <person name="Zhang W."/>
            <person name="Wang L."/>
            <person name="Ding C."/>
            <person name="Sheng H."/>
            <person name="Gu J."/>
            <person name="Chen S."/>
            <person name="Ni L."/>
            <person name="Zhu F."/>
            <person name="Chen W."/>
            <person name="Lan L."/>
            <person name="Lai Y."/>
            <person name="Cheng Z."/>
            <person name="Gu M."/>
            <person name="Jiang J."/>
            <person name="Li J."/>
            <person name="Hong G."/>
            <person name="Xue Y."/>
            <person name="Han B."/>
        </authorList>
    </citation>
    <scope>NUCLEOTIDE SEQUENCE [LARGE SCALE GENOMIC DNA]</scope>
    <source>
        <strain>cv. Nipponbare</strain>
    </source>
</reference>
<reference key="2">
    <citation type="journal article" date="2005" name="Nature">
        <title>The map-based sequence of the rice genome.</title>
        <authorList>
            <consortium name="International rice genome sequencing project (IRGSP)"/>
        </authorList>
    </citation>
    <scope>NUCLEOTIDE SEQUENCE [LARGE SCALE GENOMIC DNA]</scope>
    <source>
        <strain>cv. Nipponbare</strain>
    </source>
</reference>
<reference key="3">
    <citation type="journal article" date="2008" name="Nucleic Acids Res.">
        <title>The rice annotation project database (RAP-DB): 2008 update.</title>
        <authorList>
            <consortium name="The rice annotation project (RAP)"/>
        </authorList>
    </citation>
    <scope>GENOME REANNOTATION</scope>
    <source>
        <strain>cv. Nipponbare</strain>
    </source>
</reference>
<reference key="4">
    <citation type="journal article" date="2013" name="Rice">
        <title>Improvement of the Oryza sativa Nipponbare reference genome using next generation sequence and optical map data.</title>
        <authorList>
            <person name="Kawahara Y."/>
            <person name="de la Bastide M."/>
            <person name="Hamilton J.P."/>
            <person name="Kanamori H."/>
            <person name="McCombie W.R."/>
            <person name="Ouyang S."/>
            <person name="Schwartz D.C."/>
            <person name="Tanaka T."/>
            <person name="Wu J."/>
            <person name="Zhou S."/>
            <person name="Childs K.L."/>
            <person name="Davidson R.M."/>
            <person name="Lin H."/>
            <person name="Quesada-Ocampo L."/>
            <person name="Vaillancourt B."/>
            <person name="Sakai H."/>
            <person name="Lee S.S."/>
            <person name="Kim J."/>
            <person name="Numa H."/>
            <person name="Itoh T."/>
            <person name="Buell C.R."/>
            <person name="Matsumoto T."/>
        </authorList>
    </citation>
    <scope>GENOME REANNOTATION</scope>
    <source>
        <strain>cv. Nipponbare</strain>
    </source>
</reference>
<reference key="5">
    <citation type="journal article" date="2005" name="PLoS Biol.">
        <title>The genomes of Oryza sativa: a history of duplications.</title>
        <authorList>
            <person name="Yu J."/>
            <person name="Wang J."/>
            <person name="Lin W."/>
            <person name="Li S."/>
            <person name="Li H."/>
            <person name="Zhou J."/>
            <person name="Ni P."/>
            <person name="Dong W."/>
            <person name="Hu S."/>
            <person name="Zeng C."/>
            <person name="Zhang J."/>
            <person name="Zhang Y."/>
            <person name="Li R."/>
            <person name="Xu Z."/>
            <person name="Li S."/>
            <person name="Li X."/>
            <person name="Zheng H."/>
            <person name="Cong L."/>
            <person name="Lin L."/>
            <person name="Yin J."/>
            <person name="Geng J."/>
            <person name="Li G."/>
            <person name="Shi J."/>
            <person name="Liu J."/>
            <person name="Lv H."/>
            <person name="Li J."/>
            <person name="Wang J."/>
            <person name="Deng Y."/>
            <person name="Ran L."/>
            <person name="Shi X."/>
            <person name="Wang X."/>
            <person name="Wu Q."/>
            <person name="Li C."/>
            <person name="Ren X."/>
            <person name="Wang J."/>
            <person name="Wang X."/>
            <person name="Li D."/>
            <person name="Liu D."/>
            <person name="Zhang X."/>
            <person name="Ji Z."/>
            <person name="Zhao W."/>
            <person name="Sun Y."/>
            <person name="Zhang Z."/>
            <person name="Bao J."/>
            <person name="Han Y."/>
            <person name="Dong L."/>
            <person name="Ji J."/>
            <person name="Chen P."/>
            <person name="Wu S."/>
            <person name="Liu J."/>
            <person name="Xiao Y."/>
            <person name="Bu D."/>
            <person name="Tan J."/>
            <person name="Yang L."/>
            <person name="Ye C."/>
            <person name="Zhang J."/>
            <person name="Xu J."/>
            <person name="Zhou Y."/>
            <person name="Yu Y."/>
            <person name="Zhang B."/>
            <person name="Zhuang S."/>
            <person name="Wei H."/>
            <person name="Liu B."/>
            <person name="Lei M."/>
            <person name="Yu H."/>
            <person name="Li Y."/>
            <person name="Xu H."/>
            <person name="Wei S."/>
            <person name="He X."/>
            <person name="Fang L."/>
            <person name="Zhang Z."/>
            <person name="Zhang Y."/>
            <person name="Huang X."/>
            <person name="Su Z."/>
            <person name="Tong W."/>
            <person name="Li J."/>
            <person name="Tong Z."/>
            <person name="Li S."/>
            <person name="Ye J."/>
            <person name="Wang L."/>
            <person name="Fang L."/>
            <person name="Lei T."/>
            <person name="Chen C.-S."/>
            <person name="Chen H.-C."/>
            <person name="Xu Z."/>
            <person name="Li H."/>
            <person name="Huang H."/>
            <person name="Zhang F."/>
            <person name="Xu H."/>
            <person name="Li N."/>
            <person name="Zhao C."/>
            <person name="Li S."/>
            <person name="Dong L."/>
            <person name="Huang Y."/>
            <person name="Li L."/>
            <person name="Xi Y."/>
            <person name="Qi Q."/>
            <person name="Li W."/>
            <person name="Zhang B."/>
            <person name="Hu W."/>
            <person name="Zhang Y."/>
            <person name="Tian X."/>
            <person name="Jiao Y."/>
            <person name="Liang X."/>
            <person name="Jin J."/>
            <person name="Gao L."/>
            <person name="Zheng W."/>
            <person name="Hao B."/>
            <person name="Liu S.-M."/>
            <person name="Wang W."/>
            <person name="Yuan L."/>
            <person name="Cao M."/>
            <person name="McDermott J."/>
            <person name="Samudrala R."/>
            <person name="Wang J."/>
            <person name="Wong G.K.-S."/>
            <person name="Yang H."/>
        </authorList>
    </citation>
    <scope>NUCLEOTIDE SEQUENCE [LARGE SCALE GENOMIC DNA]</scope>
    <source>
        <strain>cv. Nipponbare</strain>
    </source>
</reference>
<reference key="6">
    <citation type="journal article" date="2003" name="Science">
        <title>Collection, mapping, and annotation of over 28,000 cDNA clones from japonica rice.</title>
        <authorList>
            <consortium name="The rice full-length cDNA consortium"/>
        </authorList>
    </citation>
    <scope>NUCLEOTIDE SEQUENCE [LARGE SCALE MRNA]</scope>
    <source>
        <strain>cv. Nipponbare</strain>
    </source>
</reference>
<dbReference type="EMBL" id="AL607004">
    <property type="protein sequence ID" value="CAE03932.3"/>
    <property type="status" value="ALT_SEQ"/>
    <property type="molecule type" value="Genomic_DNA"/>
</dbReference>
<dbReference type="EMBL" id="AL731579">
    <property type="protein sequence ID" value="CAE05478.1"/>
    <property type="status" value="ALT_SEQ"/>
    <property type="molecule type" value="Genomic_DNA"/>
</dbReference>
<dbReference type="EMBL" id="AP008210">
    <property type="protein sequence ID" value="BAF15648.1"/>
    <property type="molecule type" value="Genomic_DNA"/>
</dbReference>
<dbReference type="EMBL" id="AP014960">
    <property type="protein sequence ID" value="BAS90796.1"/>
    <property type="molecule type" value="Genomic_DNA"/>
</dbReference>
<dbReference type="EMBL" id="CM000141">
    <property type="protein sequence ID" value="EEE61598.1"/>
    <property type="molecule type" value="Genomic_DNA"/>
</dbReference>
<dbReference type="EMBL" id="AK058642">
    <property type="protein sequence ID" value="BAG86761.1"/>
    <property type="molecule type" value="mRNA"/>
</dbReference>
<dbReference type="EMBL" id="AK120076">
    <property type="protein sequence ID" value="BAG99866.1"/>
    <property type="molecule type" value="mRNA"/>
</dbReference>
<dbReference type="RefSeq" id="XP_015633718.1">
    <property type="nucleotide sequence ID" value="XM_015778232.1"/>
</dbReference>
<dbReference type="SMR" id="Q0JAI9"/>
<dbReference type="FunCoup" id="Q0JAI9">
    <property type="interactions" value="2551"/>
</dbReference>
<dbReference type="STRING" id="39947.Q0JAI9"/>
<dbReference type="PaxDb" id="39947-Q0JAI9"/>
<dbReference type="EnsemblPlants" id="Os04t0597000-01">
    <property type="protein sequence ID" value="Os04t0597000-01"/>
    <property type="gene ID" value="Os04g0597000"/>
</dbReference>
<dbReference type="EnsemblPlants" id="Os04t0597000-02">
    <property type="protein sequence ID" value="Os04t0597000-02"/>
    <property type="gene ID" value="Os04g0597000"/>
</dbReference>
<dbReference type="Gramene" id="Os04t0597000-01">
    <property type="protein sequence ID" value="Os04t0597000-01"/>
    <property type="gene ID" value="Os04g0597000"/>
</dbReference>
<dbReference type="Gramene" id="Os04t0597000-02">
    <property type="protein sequence ID" value="Os04t0597000-02"/>
    <property type="gene ID" value="Os04g0597000"/>
</dbReference>
<dbReference type="KEGG" id="dosa:Os04g0595800"/>
<dbReference type="eggNOG" id="KOG3088">
    <property type="taxonomic scope" value="Eukaryota"/>
</dbReference>
<dbReference type="HOGENOM" id="CLU_066546_3_0_1"/>
<dbReference type="InParanoid" id="Q0JAI9"/>
<dbReference type="OMA" id="TWPVGWI"/>
<dbReference type="OrthoDB" id="242866at2759"/>
<dbReference type="Proteomes" id="UP000000763">
    <property type="component" value="Chromosome 4"/>
</dbReference>
<dbReference type="Proteomes" id="UP000007752">
    <property type="component" value="Chromosome 4"/>
</dbReference>
<dbReference type="Proteomes" id="UP000059680">
    <property type="component" value="Chromosome 4"/>
</dbReference>
<dbReference type="GO" id="GO:0005886">
    <property type="term" value="C:plasma membrane"/>
    <property type="evidence" value="ECO:0007669"/>
    <property type="project" value="UniProtKB-SubCell"/>
</dbReference>
<dbReference type="GO" id="GO:0055038">
    <property type="term" value="C:recycling endosome membrane"/>
    <property type="evidence" value="ECO:0000318"/>
    <property type="project" value="GO_Central"/>
</dbReference>
<dbReference type="GO" id="GO:0032588">
    <property type="term" value="C:trans-Golgi network membrane"/>
    <property type="evidence" value="ECO:0000318"/>
    <property type="project" value="GO_Central"/>
</dbReference>
<dbReference type="GO" id="GO:0030658">
    <property type="term" value="C:transport vesicle membrane"/>
    <property type="evidence" value="ECO:0007669"/>
    <property type="project" value="UniProtKB-SubCell"/>
</dbReference>
<dbReference type="GO" id="GO:0015031">
    <property type="term" value="P:protein transport"/>
    <property type="evidence" value="ECO:0000318"/>
    <property type="project" value="GO_Central"/>
</dbReference>
<dbReference type="InterPro" id="IPR007273">
    <property type="entry name" value="SCAMP"/>
</dbReference>
<dbReference type="PANTHER" id="PTHR10687:SF2">
    <property type="entry name" value="SECRETORY CARRIER-ASSOCIATED MEMBRANE PROTEIN"/>
    <property type="match status" value="1"/>
</dbReference>
<dbReference type="PANTHER" id="PTHR10687">
    <property type="entry name" value="SECRETORY CARRIER-ASSOCIATED MEMBRANE PROTEIN SCAMP"/>
    <property type="match status" value="1"/>
</dbReference>
<dbReference type="Pfam" id="PF04144">
    <property type="entry name" value="SCAMP"/>
    <property type="match status" value="1"/>
</dbReference>
<organism>
    <name type="scientific">Oryza sativa subsp. japonica</name>
    <name type="common">Rice</name>
    <dbReference type="NCBI Taxonomy" id="39947"/>
    <lineage>
        <taxon>Eukaryota</taxon>
        <taxon>Viridiplantae</taxon>
        <taxon>Streptophyta</taxon>
        <taxon>Embryophyta</taxon>
        <taxon>Tracheophyta</taxon>
        <taxon>Spermatophyta</taxon>
        <taxon>Magnoliopsida</taxon>
        <taxon>Liliopsida</taxon>
        <taxon>Poales</taxon>
        <taxon>Poaceae</taxon>
        <taxon>BOP clade</taxon>
        <taxon>Oryzoideae</taxon>
        <taxon>Oryzeae</taxon>
        <taxon>Oryzinae</taxon>
        <taxon>Oryza</taxon>
        <taxon>Oryza sativa</taxon>
    </lineage>
</organism>
<protein>
    <recommendedName>
        <fullName>Secretory carrier-associated membrane protein 6</fullName>
        <shortName>Secretory carrier membrane protein 6</shortName>
    </recommendedName>
</protein>
<feature type="chain" id="PRO_0000304911" description="Secretory carrier-associated membrane protein 6">
    <location>
        <begin position="1"/>
        <end position="273"/>
    </location>
</feature>
<feature type="topological domain" description="Cytoplasmic" evidence="2">
    <location>
        <begin position="1"/>
        <end position="131"/>
    </location>
</feature>
<feature type="transmembrane region" description="Helical" evidence="2">
    <location>
        <begin position="132"/>
        <end position="152"/>
    </location>
</feature>
<feature type="transmembrane region" description="Helical" evidence="2">
    <location>
        <begin position="159"/>
        <end position="179"/>
    </location>
</feature>
<feature type="transmembrane region" description="Helical" evidence="2">
    <location>
        <begin position="194"/>
        <end position="214"/>
    </location>
</feature>
<feature type="transmembrane region" description="Helical" evidence="2">
    <location>
        <begin position="239"/>
        <end position="259"/>
    </location>
</feature>
<feature type="topological domain" description="Cytoplasmic" evidence="2">
    <location>
        <begin position="260"/>
        <end position="273"/>
    </location>
</feature>
<feature type="region of interest" description="Disordered" evidence="3">
    <location>
        <begin position="1"/>
        <end position="69"/>
    </location>
</feature>
<feature type="coiled-coil region" evidence="2">
    <location>
        <begin position="68"/>
        <end position="94"/>
    </location>
</feature>
<feature type="compositionally biased region" description="Gly residues" evidence="3">
    <location>
        <begin position="20"/>
        <end position="30"/>
    </location>
</feature>
<comment type="function">
    <text evidence="1">Probably involved in membrane trafficking.</text>
</comment>
<comment type="subcellular location">
    <subcellularLocation>
        <location evidence="1">Cell membrane</location>
        <topology evidence="1">Multi-pass membrane protein</topology>
    </subcellularLocation>
    <subcellularLocation>
        <location evidence="1">Cytoplasmic vesicle</location>
        <location evidence="1">Secretory vesicle membrane</location>
        <topology evidence="1">Multi-pass membrane protein</topology>
    </subcellularLocation>
</comment>
<comment type="similarity">
    <text evidence="4">Belongs to the SCAMP family.</text>
</comment>
<comment type="sequence caution" evidence="4">
    <conflict type="erroneous gene model prediction">
        <sequence resource="EMBL-CDS" id="CAE03932"/>
    </conflict>
</comment>
<comment type="sequence caution" evidence="4">
    <conflict type="erroneous gene model prediction">
        <sequence resource="EMBL-CDS" id="CAE05478"/>
    </conflict>
</comment>